<proteinExistence type="predicted"/>
<name>YDYA_SCHPO</name>
<accession>O13689</accession>
<protein>
    <recommendedName>
        <fullName>Uncharacterized protein C11E3.10</fullName>
    </recommendedName>
</protein>
<feature type="chain" id="PRO_0000116678" description="Uncharacterized protein C11E3.10">
    <location>
        <begin position="1"/>
        <end position="162"/>
    </location>
</feature>
<feature type="transmembrane region" description="Helical" evidence="1">
    <location>
        <begin position="15"/>
        <end position="35"/>
    </location>
</feature>
<feature type="transmembrane region" description="Helical" evidence="1">
    <location>
        <begin position="43"/>
        <end position="63"/>
    </location>
</feature>
<feature type="transmembrane region" description="Helical" evidence="1">
    <location>
        <begin position="70"/>
        <end position="90"/>
    </location>
</feature>
<feature type="transmembrane region" description="Helical" evidence="1">
    <location>
        <begin position="97"/>
        <end position="117"/>
    </location>
</feature>
<organism>
    <name type="scientific">Schizosaccharomyces pombe (strain 972 / ATCC 24843)</name>
    <name type="common">Fission yeast</name>
    <dbReference type="NCBI Taxonomy" id="284812"/>
    <lineage>
        <taxon>Eukaryota</taxon>
        <taxon>Fungi</taxon>
        <taxon>Dikarya</taxon>
        <taxon>Ascomycota</taxon>
        <taxon>Taphrinomycotina</taxon>
        <taxon>Schizosaccharomycetes</taxon>
        <taxon>Schizosaccharomycetales</taxon>
        <taxon>Schizosaccharomycetaceae</taxon>
        <taxon>Schizosaccharomyces</taxon>
    </lineage>
</organism>
<gene>
    <name type="ORF">SPAC11E3.10</name>
</gene>
<keyword id="KW-0472">Membrane</keyword>
<keyword id="KW-1185">Reference proteome</keyword>
<keyword id="KW-0812">Transmembrane</keyword>
<keyword id="KW-1133">Transmembrane helix</keyword>
<dbReference type="EMBL" id="CU329670">
    <property type="protein sequence ID" value="CAB11189.2"/>
    <property type="molecule type" value="Genomic_DNA"/>
</dbReference>
<dbReference type="PIR" id="T37538">
    <property type="entry name" value="T37538"/>
</dbReference>
<dbReference type="RefSeq" id="NP_594935.1">
    <property type="nucleotide sequence ID" value="NM_001020366.2"/>
</dbReference>
<dbReference type="iPTMnet" id="O13689"/>
<dbReference type="PaxDb" id="4896-SPAC11E3.10.1"/>
<dbReference type="EnsemblFungi" id="SPAC11E3.10.1">
    <property type="protein sequence ID" value="SPAC11E3.10.1:pep"/>
    <property type="gene ID" value="SPAC11E3.10"/>
</dbReference>
<dbReference type="KEGG" id="spo:2541504"/>
<dbReference type="PomBase" id="SPAC11E3.10"/>
<dbReference type="VEuPathDB" id="FungiDB:SPAC11E3.10"/>
<dbReference type="eggNOG" id="ENOG502S56A">
    <property type="taxonomic scope" value="Eukaryota"/>
</dbReference>
<dbReference type="HOGENOM" id="CLU_096870_1_0_1"/>
<dbReference type="InParanoid" id="O13689"/>
<dbReference type="OMA" id="FYWVLDT"/>
<dbReference type="PhylomeDB" id="O13689"/>
<dbReference type="PRO" id="PR:O13689"/>
<dbReference type="Proteomes" id="UP000002485">
    <property type="component" value="Chromosome I"/>
</dbReference>
<dbReference type="GO" id="GO:0005794">
    <property type="term" value="C:Golgi apparatus"/>
    <property type="evidence" value="ECO:0007005"/>
    <property type="project" value="PomBase"/>
</dbReference>
<dbReference type="GO" id="GO:0016020">
    <property type="term" value="C:membrane"/>
    <property type="evidence" value="ECO:0007669"/>
    <property type="project" value="UniProtKB-SubCell"/>
</dbReference>
<dbReference type="NCBIfam" id="NF037970">
    <property type="entry name" value="vanZ_1"/>
    <property type="match status" value="1"/>
</dbReference>
<dbReference type="PANTHER" id="PTHR28008">
    <property type="entry name" value="DOMAIN PROTEIN, PUTATIVE (AFU_ORTHOLOGUE AFUA_3G10980)-RELATED"/>
    <property type="match status" value="1"/>
</dbReference>
<dbReference type="PANTHER" id="PTHR28008:SF1">
    <property type="entry name" value="DOMAIN PROTEIN, PUTATIVE (AFU_ORTHOLOGUE AFUA_3G10980)-RELATED"/>
    <property type="match status" value="1"/>
</dbReference>
<evidence type="ECO:0000255" key="1"/>
<evidence type="ECO:0000305" key="2"/>
<comment type="subcellular location">
    <subcellularLocation>
        <location evidence="2">Membrane</location>
        <topology evidence="2">Multi-pass membrane protein</topology>
    </subcellularLocation>
</comment>
<sequence>MMLPSYLHFAIRKKVLAIFIVLLIISAYLGFAPALPVPINDKVCHFFVFFLLTLVFYWVFDLSRRRATQLTILVCGVFGGLGSEFVQSFLTYRTFDLFDIVANLLGCSLALLLNILYHKRRLEKIRLQRYGHVPTIADDLEMQASAAEEEEEGEEDVSKSTP</sequence>
<reference key="1">
    <citation type="journal article" date="2002" name="Nature">
        <title>The genome sequence of Schizosaccharomyces pombe.</title>
        <authorList>
            <person name="Wood V."/>
            <person name="Gwilliam R."/>
            <person name="Rajandream M.A."/>
            <person name="Lyne M.H."/>
            <person name="Lyne R."/>
            <person name="Stewart A."/>
            <person name="Sgouros J.G."/>
            <person name="Peat N."/>
            <person name="Hayles J."/>
            <person name="Baker S.G."/>
            <person name="Basham D."/>
            <person name="Bowman S."/>
            <person name="Brooks K."/>
            <person name="Brown D."/>
            <person name="Brown S."/>
            <person name="Chillingworth T."/>
            <person name="Churcher C.M."/>
            <person name="Collins M."/>
            <person name="Connor R."/>
            <person name="Cronin A."/>
            <person name="Davis P."/>
            <person name="Feltwell T."/>
            <person name="Fraser A."/>
            <person name="Gentles S."/>
            <person name="Goble A."/>
            <person name="Hamlin N."/>
            <person name="Harris D.E."/>
            <person name="Hidalgo J."/>
            <person name="Hodgson G."/>
            <person name="Holroyd S."/>
            <person name="Hornsby T."/>
            <person name="Howarth S."/>
            <person name="Huckle E.J."/>
            <person name="Hunt S."/>
            <person name="Jagels K."/>
            <person name="James K.D."/>
            <person name="Jones L."/>
            <person name="Jones M."/>
            <person name="Leather S."/>
            <person name="McDonald S."/>
            <person name="McLean J."/>
            <person name="Mooney P."/>
            <person name="Moule S."/>
            <person name="Mungall K.L."/>
            <person name="Murphy L.D."/>
            <person name="Niblett D."/>
            <person name="Odell C."/>
            <person name="Oliver K."/>
            <person name="O'Neil S."/>
            <person name="Pearson D."/>
            <person name="Quail M.A."/>
            <person name="Rabbinowitsch E."/>
            <person name="Rutherford K.M."/>
            <person name="Rutter S."/>
            <person name="Saunders D."/>
            <person name="Seeger K."/>
            <person name="Sharp S."/>
            <person name="Skelton J."/>
            <person name="Simmonds M.N."/>
            <person name="Squares R."/>
            <person name="Squares S."/>
            <person name="Stevens K."/>
            <person name="Taylor K."/>
            <person name="Taylor R.G."/>
            <person name="Tivey A."/>
            <person name="Walsh S.V."/>
            <person name="Warren T."/>
            <person name="Whitehead S."/>
            <person name="Woodward J.R."/>
            <person name="Volckaert G."/>
            <person name="Aert R."/>
            <person name="Robben J."/>
            <person name="Grymonprez B."/>
            <person name="Weltjens I."/>
            <person name="Vanstreels E."/>
            <person name="Rieger M."/>
            <person name="Schaefer M."/>
            <person name="Mueller-Auer S."/>
            <person name="Gabel C."/>
            <person name="Fuchs M."/>
            <person name="Duesterhoeft A."/>
            <person name="Fritzc C."/>
            <person name="Holzer E."/>
            <person name="Moestl D."/>
            <person name="Hilbert H."/>
            <person name="Borzym K."/>
            <person name="Langer I."/>
            <person name="Beck A."/>
            <person name="Lehrach H."/>
            <person name="Reinhardt R."/>
            <person name="Pohl T.M."/>
            <person name="Eger P."/>
            <person name="Zimmermann W."/>
            <person name="Wedler H."/>
            <person name="Wambutt R."/>
            <person name="Purnelle B."/>
            <person name="Goffeau A."/>
            <person name="Cadieu E."/>
            <person name="Dreano S."/>
            <person name="Gloux S."/>
            <person name="Lelaure V."/>
            <person name="Mottier S."/>
            <person name="Galibert F."/>
            <person name="Aves S.J."/>
            <person name="Xiang Z."/>
            <person name="Hunt C."/>
            <person name="Moore K."/>
            <person name="Hurst S.M."/>
            <person name="Lucas M."/>
            <person name="Rochet M."/>
            <person name="Gaillardin C."/>
            <person name="Tallada V.A."/>
            <person name="Garzon A."/>
            <person name="Thode G."/>
            <person name="Daga R.R."/>
            <person name="Cruzado L."/>
            <person name="Jimenez J."/>
            <person name="Sanchez M."/>
            <person name="del Rey F."/>
            <person name="Benito J."/>
            <person name="Dominguez A."/>
            <person name="Revuelta J.L."/>
            <person name="Moreno S."/>
            <person name="Armstrong J."/>
            <person name="Forsburg S.L."/>
            <person name="Cerutti L."/>
            <person name="Lowe T."/>
            <person name="McCombie W.R."/>
            <person name="Paulsen I."/>
            <person name="Potashkin J."/>
            <person name="Shpakovski G.V."/>
            <person name="Ussery D."/>
            <person name="Barrell B.G."/>
            <person name="Nurse P."/>
        </authorList>
    </citation>
    <scope>NUCLEOTIDE SEQUENCE [LARGE SCALE GENOMIC DNA]</scope>
    <source>
        <strain>972 / ATCC 24843</strain>
    </source>
</reference>